<keyword id="KW-0227">DNA damage</keyword>
<keyword id="KW-0234">DNA repair</keyword>
<keyword id="KW-0235">DNA replication</keyword>
<keyword id="KW-0436">Ligase</keyword>
<keyword id="KW-0460">Magnesium</keyword>
<keyword id="KW-0464">Manganese</keyword>
<keyword id="KW-0479">Metal-binding</keyword>
<keyword id="KW-0520">NAD</keyword>
<keyword id="KW-0862">Zinc</keyword>
<sequence>MHKDEIQNLTALEAASELEWLAKEITRHDVLYNRNDQPEISDAEYDALRRRNAEIEALFPELIRPDSPSHKIGAPISEKFEKSVHSQPMLSLDNAFSSEDVSEFMERVRRFLRLPETQMLEITAEPKIDGLSLSLRYEQGRLVCAATRGDGYVGENVTANARTISDIPQVLQGKFPDIIEVRGEVYMRRADFQALNVNQQEKGKLAFANPRNAAAGSLRQLDSRITASRKLQFFAYACGEVSEIFAESQMGMMEKLKEYGFVINPLIKKIKSLEELISYYHDIEERRHALSYDIDGIVYKVNDLMLQMRLGFVSRSPRWAIAHKFPAEKAMTVLEGIDIQVGRTGALTPVARLAPITVGGVVITNASLHNEDYIKGIGSKGEPIREGNDIRVGDTVIVQRAGDVIPQIIDIVAEKRSKDASAFVFPYLCPACGSYAVREIGEAVRRCTGGLICPAQAIERIRHFVSRNAFDIEGLGKKQVEFFFQIQDETLCIHTPADIFTLQRRQEKSLVHLENMEGFGTVSVRKLYDAINARRKIPLSRFLFALGIRYVGEVNARRLARAYQNYTAFETAAMAATMPDDKVGKEGNEAWMELTNIEGIGPQVGEAIIDFYKEVHNREVLSGLLCEVTPLDEESVMTASSPIAGKIIVFTGTLTRMSRDEAKALAERLGAKTSGSLSKKTNLLVAGVGGGSKLTKAQELGVEVIDEEAWLQLIEG</sequence>
<evidence type="ECO:0000255" key="1">
    <source>
        <dbReference type="HAMAP-Rule" id="MF_01588"/>
    </source>
</evidence>
<name>DNLJ_BARHE</name>
<organism>
    <name type="scientific">Bartonella henselae (strain ATCC 49882 / DSM 28221 / CCUG 30454 / Houston 1)</name>
    <name type="common">Rochalimaea henselae</name>
    <dbReference type="NCBI Taxonomy" id="283166"/>
    <lineage>
        <taxon>Bacteria</taxon>
        <taxon>Pseudomonadati</taxon>
        <taxon>Pseudomonadota</taxon>
        <taxon>Alphaproteobacteria</taxon>
        <taxon>Hyphomicrobiales</taxon>
        <taxon>Bartonellaceae</taxon>
        <taxon>Bartonella</taxon>
    </lineage>
</organism>
<comment type="function">
    <text evidence="1">DNA ligase that catalyzes the formation of phosphodiester linkages between 5'-phosphoryl and 3'-hydroxyl groups in double-stranded DNA using NAD as a coenzyme and as the energy source for the reaction. It is essential for DNA replication and repair of damaged DNA.</text>
</comment>
<comment type="catalytic activity">
    <reaction evidence="1">
        <text>NAD(+) + (deoxyribonucleotide)n-3'-hydroxyl + 5'-phospho-(deoxyribonucleotide)m = (deoxyribonucleotide)n+m + AMP + beta-nicotinamide D-nucleotide.</text>
        <dbReference type="EC" id="6.5.1.2"/>
    </reaction>
</comment>
<comment type="cofactor">
    <cofactor evidence="1">
        <name>Mg(2+)</name>
        <dbReference type="ChEBI" id="CHEBI:18420"/>
    </cofactor>
    <cofactor evidence="1">
        <name>Mn(2+)</name>
        <dbReference type="ChEBI" id="CHEBI:29035"/>
    </cofactor>
</comment>
<comment type="similarity">
    <text evidence="1">Belongs to the NAD-dependent DNA ligase family. LigA subfamily.</text>
</comment>
<reference key="1">
    <citation type="journal article" date="2004" name="Proc. Natl. Acad. Sci. U.S.A.">
        <title>The louse-borne human pathogen Bartonella quintana is a genomic derivative of the zoonotic agent Bartonella henselae.</title>
        <authorList>
            <person name="Alsmark U.C.M."/>
            <person name="Frank A.C."/>
            <person name="Karlberg E.O."/>
            <person name="Legault B.-A."/>
            <person name="Ardell D.H."/>
            <person name="Canbaeck B."/>
            <person name="Eriksson A.-S."/>
            <person name="Naeslund A.K."/>
            <person name="Handley S.A."/>
            <person name="Huvet M."/>
            <person name="La Scola B."/>
            <person name="Holmberg M."/>
            <person name="Andersson S.G.E."/>
        </authorList>
    </citation>
    <scope>NUCLEOTIDE SEQUENCE [LARGE SCALE GENOMIC DNA]</scope>
    <source>
        <strain>ATCC 49882 / DSM 28221 / CCUG 30454 / Houston 1</strain>
    </source>
</reference>
<dbReference type="EC" id="6.5.1.2" evidence="1"/>
<dbReference type="EMBL" id="BX897699">
    <property type="protein sequence ID" value="CAF27899.1"/>
    <property type="molecule type" value="Genomic_DNA"/>
</dbReference>
<dbReference type="RefSeq" id="WP_011180962.1">
    <property type="nucleotide sequence ID" value="NC_005956.1"/>
</dbReference>
<dbReference type="SMR" id="Q6G2R5"/>
<dbReference type="PaxDb" id="283166-BH11140"/>
<dbReference type="EnsemblBacteria" id="CAF27899">
    <property type="protein sequence ID" value="CAF27899"/>
    <property type="gene ID" value="BH11140"/>
</dbReference>
<dbReference type="GeneID" id="92985728"/>
<dbReference type="KEGG" id="bhe:BH11140"/>
<dbReference type="eggNOG" id="COG0272">
    <property type="taxonomic scope" value="Bacteria"/>
</dbReference>
<dbReference type="OrthoDB" id="9759736at2"/>
<dbReference type="Proteomes" id="UP000000421">
    <property type="component" value="Chromosome"/>
</dbReference>
<dbReference type="GO" id="GO:0005829">
    <property type="term" value="C:cytosol"/>
    <property type="evidence" value="ECO:0007669"/>
    <property type="project" value="TreeGrafter"/>
</dbReference>
<dbReference type="GO" id="GO:0003911">
    <property type="term" value="F:DNA ligase (NAD+) activity"/>
    <property type="evidence" value="ECO:0007669"/>
    <property type="project" value="UniProtKB-UniRule"/>
</dbReference>
<dbReference type="GO" id="GO:0046872">
    <property type="term" value="F:metal ion binding"/>
    <property type="evidence" value="ECO:0007669"/>
    <property type="project" value="UniProtKB-KW"/>
</dbReference>
<dbReference type="GO" id="GO:0006281">
    <property type="term" value="P:DNA repair"/>
    <property type="evidence" value="ECO:0007669"/>
    <property type="project" value="UniProtKB-KW"/>
</dbReference>
<dbReference type="GO" id="GO:0006260">
    <property type="term" value="P:DNA replication"/>
    <property type="evidence" value="ECO:0007669"/>
    <property type="project" value="UniProtKB-KW"/>
</dbReference>
<dbReference type="CDD" id="cd17748">
    <property type="entry name" value="BRCT_DNA_ligase_like"/>
    <property type="match status" value="1"/>
</dbReference>
<dbReference type="CDD" id="cd00114">
    <property type="entry name" value="LIGANc"/>
    <property type="match status" value="1"/>
</dbReference>
<dbReference type="FunFam" id="3.30.470.30:FF:000001">
    <property type="entry name" value="DNA ligase"/>
    <property type="match status" value="1"/>
</dbReference>
<dbReference type="Gene3D" id="6.20.10.30">
    <property type="match status" value="1"/>
</dbReference>
<dbReference type="Gene3D" id="1.10.150.20">
    <property type="entry name" value="5' to 3' exonuclease, C-terminal subdomain"/>
    <property type="match status" value="2"/>
</dbReference>
<dbReference type="Gene3D" id="3.40.50.10190">
    <property type="entry name" value="BRCT domain"/>
    <property type="match status" value="1"/>
</dbReference>
<dbReference type="Gene3D" id="3.30.470.30">
    <property type="entry name" value="DNA ligase/mRNA capping enzyme"/>
    <property type="match status" value="1"/>
</dbReference>
<dbReference type="Gene3D" id="1.10.287.610">
    <property type="entry name" value="Helix hairpin bin"/>
    <property type="match status" value="1"/>
</dbReference>
<dbReference type="Gene3D" id="2.40.50.140">
    <property type="entry name" value="Nucleic acid-binding proteins"/>
    <property type="match status" value="1"/>
</dbReference>
<dbReference type="HAMAP" id="MF_01588">
    <property type="entry name" value="DNA_ligase_A"/>
    <property type="match status" value="1"/>
</dbReference>
<dbReference type="InterPro" id="IPR001357">
    <property type="entry name" value="BRCT_dom"/>
</dbReference>
<dbReference type="InterPro" id="IPR036420">
    <property type="entry name" value="BRCT_dom_sf"/>
</dbReference>
<dbReference type="InterPro" id="IPR041663">
    <property type="entry name" value="DisA/LigA_HHH"/>
</dbReference>
<dbReference type="InterPro" id="IPR001679">
    <property type="entry name" value="DNA_ligase"/>
</dbReference>
<dbReference type="InterPro" id="IPR018239">
    <property type="entry name" value="DNA_ligase_AS"/>
</dbReference>
<dbReference type="InterPro" id="IPR033136">
    <property type="entry name" value="DNA_ligase_CS"/>
</dbReference>
<dbReference type="InterPro" id="IPR013839">
    <property type="entry name" value="DNAligase_adenylation"/>
</dbReference>
<dbReference type="InterPro" id="IPR013840">
    <property type="entry name" value="DNAligase_N"/>
</dbReference>
<dbReference type="InterPro" id="IPR012340">
    <property type="entry name" value="NA-bd_OB-fold"/>
</dbReference>
<dbReference type="InterPro" id="IPR004150">
    <property type="entry name" value="NAD_DNA_ligase_OB"/>
</dbReference>
<dbReference type="InterPro" id="IPR010994">
    <property type="entry name" value="RuvA_2-like"/>
</dbReference>
<dbReference type="InterPro" id="IPR004149">
    <property type="entry name" value="Znf_DNAligase_C4"/>
</dbReference>
<dbReference type="NCBIfam" id="TIGR00575">
    <property type="entry name" value="dnlj"/>
    <property type="match status" value="1"/>
</dbReference>
<dbReference type="NCBIfam" id="NF005932">
    <property type="entry name" value="PRK07956.1"/>
    <property type="match status" value="1"/>
</dbReference>
<dbReference type="PANTHER" id="PTHR23389">
    <property type="entry name" value="CHROMOSOME TRANSMISSION FIDELITY FACTOR 18"/>
    <property type="match status" value="1"/>
</dbReference>
<dbReference type="PANTHER" id="PTHR23389:SF9">
    <property type="entry name" value="DNA LIGASE"/>
    <property type="match status" value="1"/>
</dbReference>
<dbReference type="Pfam" id="PF00533">
    <property type="entry name" value="BRCT"/>
    <property type="match status" value="1"/>
</dbReference>
<dbReference type="Pfam" id="PF01653">
    <property type="entry name" value="DNA_ligase_aden"/>
    <property type="match status" value="1"/>
</dbReference>
<dbReference type="Pfam" id="PF03120">
    <property type="entry name" value="DNA_ligase_OB"/>
    <property type="match status" value="1"/>
</dbReference>
<dbReference type="Pfam" id="PF03119">
    <property type="entry name" value="DNA_ligase_ZBD"/>
    <property type="match status" value="1"/>
</dbReference>
<dbReference type="Pfam" id="PF12826">
    <property type="entry name" value="HHH_2"/>
    <property type="match status" value="1"/>
</dbReference>
<dbReference type="PIRSF" id="PIRSF001604">
    <property type="entry name" value="LigA"/>
    <property type="match status" value="1"/>
</dbReference>
<dbReference type="SMART" id="SM00292">
    <property type="entry name" value="BRCT"/>
    <property type="match status" value="1"/>
</dbReference>
<dbReference type="SMART" id="SM00532">
    <property type="entry name" value="LIGANc"/>
    <property type="match status" value="1"/>
</dbReference>
<dbReference type="SUPFAM" id="SSF52113">
    <property type="entry name" value="BRCT domain"/>
    <property type="match status" value="1"/>
</dbReference>
<dbReference type="SUPFAM" id="SSF56091">
    <property type="entry name" value="DNA ligase/mRNA capping enzyme, catalytic domain"/>
    <property type="match status" value="1"/>
</dbReference>
<dbReference type="SUPFAM" id="SSF50249">
    <property type="entry name" value="Nucleic acid-binding proteins"/>
    <property type="match status" value="1"/>
</dbReference>
<dbReference type="SUPFAM" id="SSF47781">
    <property type="entry name" value="RuvA domain 2-like"/>
    <property type="match status" value="1"/>
</dbReference>
<dbReference type="PROSITE" id="PS50172">
    <property type="entry name" value="BRCT"/>
    <property type="match status" value="1"/>
</dbReference>
<dbReference type="PROSITE" id="PS01055">
    <property type="entry name" value="DNA_LIGASE_N1"/>
    <property type="match status" value="1"/>
</dbReference>
<dbReference type="PROSITE" id="PS01056">
    <property type="entry name" value="DNA_LIGASE_N2"/>
    <property type="match status" value="1"/>
</dbReference>
<feature type="chain" id="PRO_0000313135" description="DNA ligase">
    <location>
        <begin position="1"/>
        <end position="716"/>
    </location>
</feature>
<feature type="domain" description="BRCT" evidence="1">
    <location>
        <begin position="638"/>
        <end position="716"/>
    </location>
</feature>
<feature type="active site" description="N6-AMP-lysine intermediate" evidence="1">
    <location>
        <position position="127"/>
    </location>
</feature>
<feature type="binding site" evidence="1">
    <location>
        <begin position="42"/>
        <end position="46"/>
    </location>
    <ligand>
        <name>NAD(+)</name>
        <dbReference type="ChEBI" id="CHEBI:57540"/>
    </ligand>
</feature>
<feature type="binding site" evidence="1">
    <location>
        <begin position="91"/>
        <end position="92"/>
    </location>
    <ligand>
        <name>NAD(+)</name>
        <dbReference type="ChEBI" id="CHEBI:57540"/>
    </ligand>
</feature>
<feature type="binding site" evidence="1">
    <location>
        <position position="125"/>
    </location>
    <ligand>
        <name>NAD(+)</name>
        <dbReference type="ChEBI" id="CHEBI:57540"/>
    </ligand>
</feature>
<feature type="binding site" evidence="1">
    <location>
        <position position="148"/>
    </location>
    <ligand>
        <name>NAD(+)</name>
        <dbReference type="ChEBI" id="CHEBI:57540"/>
    </ligand>
</feature>
<feature type="binding site" evidence="1">
    <location>
        <position position="184"/>
    </location>
    <ligand>
        <name>NAD(+)</name>
        <dbReference type="ChEBI" id="CHEBI:57540"/>
    </ligand>
</feature>
<feature type="binding site" evidence="1">
    <location>
        <position position="300"/>
    </location>
    <ligand>
        <name>NAD(+)</name>
        <dbReference type="ChEBI" id="CHEBI:57540"/>
    </ligand>
</feature>
<feature type="binding site" evidence="1">
    <location>
        <position position="324"/>
    </location>
    <ligand>
        <name>NAD(+)</name>
        <dbReference type="ChEBI" id="CHEBI:57540"/>
    </ligand>
</feature>
<feature type="binding site" evidence="1">
    <location>
        <position position="429"/>
    </location>
    <ligand>
        <name>Zn(2+)</name>
        <dbReference type="ChEBI" id="CHEBI:29105"/>
    </ligand>
</feature>
<feature type="binding site" evidence="1">
    <location>
        <position position="432"/>
    </location>
    <ligand>
        <name>Zn(2+)</name>
        <dbReference type="ChEBI" id="CHEBI:29105"/>
    </ligand>
</feature>
<feature type="binding site" evidence="1">
    <location>
        <position position="447"/>
    </location>
    <ligand>
        <name>Zn(2+)</name>
        <dbReference type="ChEBI" id="CHEBI:29105"/>
    </ligand>
</feature>
<feature type="binding site" evidence="1">
    <location>
        <position position="453"/>
    </location>
    <ligand>
        <name>Zn(2+)</name>
        <dbReference type="ChEBI" id="CHEBI:29105"/>
    </ligand>
</feature>
<protein>
    <recommendedName>
        <fullName evidence="1">DNA ligase</fullName>
        <ecNumber evidence="1">6.5.1.2</ecNumber>
    </recommendedName>
    <alternativeName>
        <fullName evidence="1">Polydeoxyribonucleotide synthase [NAD(+)]</fullName>
    </alternativeName>
</protein>
<gene>
    <name evidence="1" type="primary">ligA</name>
    <name type="ordered locus">BH11140</name>
</gene>
<accession>Q6G2R5</accession>
<proteinExistence type="inferred from homology"/>